<evidence type="ECO:0000255" key="1">
    <source>
        <dbReference type="HAMAP-Rule" id="MF_00537"/>
    </source>
</evidence>
<evidence type="ECO:0000305" key="2"/>
<keyword id="KW-0687">Ribonucleoprotein</keyword>
<keyword id="KW-0689">Ribosomal protein</keyword>
<keyword id="KW-0694">RNA-binding</keyword>
<keyword id="KW-0699">rRNA-binding</keyword>
<gene>
    <name evidence="1" type="primary">rpsN</name>
    <name type="ordered locus">BSUIS_A1269</name>
</gene>
<accession>B0CH19</accession>
<name>RS14_BRUSI</name>
<reference key="1">
    <citation type="submission" date="2007-12" db="EMBL/GenBank/DDBJ databases">
        <title>Brucella suis ATCC 23445 whole genome shotgun sequencing project.</title>
        <authorList>
            <person name="Setubal J.C."/>
            <person name="Bowns C."/>
            <person name="Boyle S."/>
            <person name="Crasta O.R."/>
            <person name="Czar M.J."/>
            <person name="Dharmanolla C."/>
            <person name="Gillespie J.J."/>
            <person name="Kenyon R.W."/>
            <person name="Lu J."/>
            <person name="Mane S."/>
            <person name="Mohapatra S."/>
            <person name="Nagrani S."/>
            <person name="Purkayastha A."/>
            <person name="Rajasimha H.K."/>
            <person name="Shallom J.M."/>
            <person name="Shallom S."/>
            <person name="Shukla M."/>
            <person name="Snyder E.E."/>
            <person name="Sobral B.W."/>
            <person name="Wattam A.R."/>
            <person name="Will R."/>
            <person name="Williams K."/>
            <person name="Yoo H."/>
            <person name="Bruce D."/>
            <person name="Detter C."/>
            <person name="Munk C."/>
            <person name="Brettin T.S."/>
        </authorList>
    </citation>
    <scope>NUCLEOTIDE SEQUENCE [LARGE SCALE GENOMIC DNA]</scope>
    <source>
        <strain>ATCC 23445 / NCTC 10510</strain>
    </source>
</reference>
<dbReference type="EMBL" id="CP000911">
    <property type="protein sequence ID" value="ABY38320.1"/>
    <property type="molecule type" value="Genomic_DNA"/>
</dbReference>
<dbReference type="RefSeq" id="WP_002964349.1">
    <property type="nucleotide sequence ID" value="NC_010169.1"/>
</dbReference>
<dbReference type="SMR" id="B0CH19"/>
<dbReference type="GeneID" id="97533537"/>
<dbReference type="KEGG" id="bmt:BSUIS_A1269"/>
<dbReference type="HOGENOM" id="CLU_139869_0_1_5"/>
<dbReference type="Proteomes" id="UP000008545">
    <property type="component" value="Chromosome I"/>
</dbReference>
<dbReference type="GO" id="GO:0005737">
    <property type="term" value="C:cytoplasm"/>
    <property type="evidence" value="ECO:0007669"/>
    <property type="project" value="UniProtKB-ARBA"/>
</dbReference>
<dbReference type="GO" id="GO:0015935">
    <property type="term" value="C:small ribosomal subunit"/>
    <property type="evidence" value="ECO:0007669"/>
    <property type="project" value="TreeGrafter"/>
</dbReference>
<dbReference type="GO" id="GO:0019843">
    <property type="term" value="F:rRNA binding"/>
    <property type="evidence" value="ECO:0007669"/>
    <property type="project" value="UniProtKB-UniRule"/>
</dbReference>
<dbReference type="GO" id="GO:0003735">
    <property type="term" value="F:structural constituent of ribosome"/>
    <property type="evidence" value="ECO:0007669"/>
    <property type="project" value="InterPro"/>
</dbReference>
<dbReference type="GO" id="GO:0006412">
    <property type="term" value="P:translation"/>
    <property type="evidence" value="ECO:0007669"/>
    <property type="project" value="UniProtKB-UniRule"/>
</dbReference>
<dbReference type="FunFam" id="1.10.287.1480:FF:000001">
    <property type="entry name" value="30S ribosomal protein S14"/>
    <property type="match status" value="1"/>
</dbReference>
<dbReference type="Gene3D" id="1.10.287.1480">
    <property type="match status" value="1"/>
</dbReference>
<dbReference type="HAMAP" id="MF_00537">
    <property type="entry name" value="Ribosomal_uS14_1"/>
    <property type="match status" value="1"/>
</dbReference>
<dbReference type="InterPro" id="IPR001209">
    <property type="entry name" value="Ribosomal_uS14"/>
</dbReference>
<dbReference type="InterPro" id="IPR023036">
    <property type="entry name" value="Ribosomal_uS14_bac/plastid"/>
</dbReference>
<dbReference type="InterPro" id="IPR018271">
    <property type="entry name" value="Ribosomal_uS14_CS"/>
</dbReference>
<dbReference type="NCBIfam" id="NF006477">
    <property type="entry name" value="PRK08881.1"/>
    <property type="match status" value="1"/>
</dbReference>
<dbReference type="PANTHER" id="PTHR19836">
    <property type="entry name" value="30S RIBOSOMAL PROTEIN S14"/>
    <property type="match status" value="1"/>
</dbReference>
<dbReference type="PANTHER" id="PTHR19836:SF19">
    <property type="entry name" value="SMALL RIBOSOMAL SUBUNIT PROTEIN US14M"/>
    <property type="match status" value="1"/>
</dbReference>
<dbReference type="Pfam" id="PF00253">
    <property type="entry name" value="Ribosomal_S14"/>
    <property type="match status" value="1"/>
</dbReference>
<dbReference type="SUPFAM" id="SSF57716">
    <property type="entry name" value="Glucocorticoid receptor-like (DNA-binding domain)"/>
    <property type="match status" value="1"/>
</dbReference>
<dbReference type="PROSITE" id="PS00527">
    <property type="entry name" value="RIBOSOMAL_S14"/>
    <property type="match status" value="1"/>
</dbReference>
<proteinExistence type="inferred from homology"/>
<feature type="chain" id="PRO_1000128324" description="Small ribosomal subunit protein uS14">
    <location>
        <begin position="1"/>
        <end position="101"/>
    </location>
</feature>
<protein>
    <recommendedName>
        <fullName evidence="1">Small ribosomal subunit protein uS14</fullName>
    </recommendedName>
    <alternativeName>
        <fullName evidence="2">30S ribosomal protein S14</fullName>
    </alternativeName>
</protein>
<comment type="function">
    <text evidence="1">Binds 16S rRNA, required for the assembly of 30S particles and may also be responsible for determining the conformation of the 16S rRNA at the A site.</text>
</comment>
<comment type="subunit">
    <text evidence="1">Part of the 30S ribosomal subunit. Contacts proteins S3 and S10.</text>
</comment>
<comment type="similarity">
    <text evidence="1">Belongs to the universal ribosomal protein uS14 family.</text>
</comment>
<sequence>MAKTSAVEKNKRREKLVKRHAVKRARLKAIVMDQGLPLEERFRATIRLAELPRNSAKVRIRNRCEVSGRPRGYYRKLKMSRIALRQLGSLGQIPGVVKSSW</sequence>
<organism>
    <name type="scientific">Brucella suis (strain ATCC 23445 / NCTC 10510)</name>
    <dbReference type="NCBI Taxonomy" id="470137"/>
    <lineage>
        <taxon>Bacteria</taxon>
        <taxon>Pseudomonadati</taxon>
        <taxon>Pseudomonadota</taxon>
        <taxon>Alphaproteobacteria</taxon>
        <taxon>Hyphomicrobiales</taxon>
        <taxon>Brucellaceae</taxon>
        <taxon>Brucella/Ochrobactrum group</taxon>
        <taxon>Brucella</taxon>
    </lineage>
</organism>